<keyword id="KW-1185">Reference proteome</keyword>
<organism>
    <name type="scientific">Invertebrate iridescent virus 6</name>
    <name type="common">IIV-6</name>
    <name type="synonym">Chilo iridescent virus</name>
    <dbReference type="NCBI Taxonomy" id="176652"/>
    <lineage>
        <taxon>Viruses</taxon>
        <taxon>Varidnaviria</taxon>
        <taxon>Bamfordvirae</taxon>
        <taxon>Nucleocytoviricota</taxon>
        <taxon>Megaviricetes</taxon>
        <taxon>Pimascovirales</taxon>
        <taxon>Iridoviridae</taxon>
        <taxon>Betairidovirinae</taxon>
        <taxon>Iridovirus</taxon>
    </lineage>
</organism>
<proteinExistence type="inferred from homology"/>
<evidence type="ECO:0000305" key="1"/>
<comment type="similarity">
    <text evidence="1">Belongs to the IIV-6 050L family.</text>
</comment>
<gene>
    <name type="ORF">IIV6-050L</name>
</gene>
<organismHost>
    <name type="scientific">Acheta domesticus</name>
    <name type="common">House cricket</name>
    <dbReference type="NCBI Taxonomy" id="6997"/>
</organismHost>
<organismHost>
    <name type="scientific">Chilo suppressalis</name>
    <name type="common">Asiatic rice borer moth</name>
    <dbReference type="NCBI Taxonomy" id="168631"/>
</organismHost>
<organismHost>
    <name type="scientific">Gryllus bimaculatus</name>
    <name type="common">Two-spotted cricket</name>
    <dbReference type="NCBI Taxonomy" id="6999"/>
</organismHost>
<organismHost>
    <name type="scientific">Gryllus campestris</name>
    <dbReference type="NCBI Taxonomy" id="58607"/>
</organismHost>
<organismHost>
    <name type="scientific">Spodoptera frugiperda</name>
    <name type="common">Fall armyworm</name>
    <dbReference type="NCBI Taxonomy" id="7108"/>
</organismHost>
<protein>
    <recommendedName>
        <fullName>Uncharacterized protein 050L</fullName>
    </recommendedName>
</protein>
<name>VF050_IIV6</name>
<accession>Q91G49</accession>
<feature type="chain" id="PRO_0000377759" description="Uncharacterized protein 050L">
    <location>
        <begin position="1"/>
        <end position="1052"/>
    </location>
</feature>
<reference key="1">
    <citation type="journal article" date="2001" name="Virology">
        <title>Analysis of the first complete DNA sequence of an invertebrate iridovirus: coding strategy of the genome of Chilo iridescent virus.</title>
        <authorList>
            <person name="Jakob N.J."/>
            <person name="Mueller K."/>
            <person name="Bahr U."/>
            <person name="Darai G."/>
        </authorList>
    </citation>
    <scope>NUCLEOTIDE SEQUENCE [LARGE SCALE GENOMIC DNA]</scope>
</reference>
<reference key="2">
    <citation type="journal article" date="2007" name="Virol. J.">
        <title>Comparative genomic analysis of the family Iridoviridae: re-annotating and defining the core set of iridovirus genes.</title>
        <authorList>
            <person name="Eaton H.E."/>
            <person name="Metcalf J."/>
            <person name="Penny E."/>
            <person name="Tcherepanov V."/>
            <person name="Upton C."/>
            <person name="Brunetti C.R."/>
        </authorList>
    </citation>
    <scope>GENOME REANNOTATION</scope>
</reference>
<sequence length="1052" mass="122457">MIELKLKNFKCFENKTFNFKDEMVLISAPSGSGKTSILSAIKFALWGSGKTLTKGEIMHGKNSCSVTLTYNDITIQRTKRPNRLVYTKQNEIYEDNEAQIYINEYFGNQSHNNFLESSSLDKTEYLEKMAFGKSTEIIELMKENTKENIRSINDETNNTEGQLSLTKKLLKSVINDWNNRMCSIVEPQIPQIPVFENKVLNVSIYEEKDNIEKEIESLKLKNINHSILKSKLETILKQKCDLMNQIQNVKNNIDVTKNNLIYLNDLSTVSIDDLQEKINKINHEKKILNEKHTKILIEKSNLQNFLNETNTLNQKLTELKIKKENLTPTIVLSSENEQSTQSFSLLKTRETHELNSLKTTLQNDISCMTEIMLKESVCKSQTDSLKKNIVKIEDEVVRLLNITKTVNLTLMNENLSTLYQQSDHFNKIAAQKTILTTKVQNINIEKSKIEEKMVKTQKCNEDDVNKLDFKVQKLEKVKSFNKYLNSIKEHLKQSFPGVETLEFTGHKSQLSVIKDFFEDALYTQKLGDKAPKYKCPKCLHPLSIQHKNDKINIVSYIDEYILEILVKVNELLSEYNNETTIEVMDDEEIENIKDFKKLILEREAFQIQIKKLEEEIKNLPVLYDKSNEIQSLQNTIASYNANNIQLLKEETKLKEEKKLLTQNITMSKLIHEESNKIKDTYKIMIGIDKDITNENIQTYLKKELSDLESELKERLIFETNLLIYNDIVSQIKTILDRQTIITEEIATIKKFIEEHSNIDELIDNLNQEHNLCYTNLLNKHKYEQYNTQLLNYINLCVEYNESLNKVETDMETLKDQLKDDEKCCLELQKLQEYMKQIESFIKIQKKYELELNKFNEWTKLKNEYKKSVSNYETIINDLENRLLKLNNEYSASITLKLKISEAQNIALTSLVDTINIYVQQFLDLFFEEPIVINLTMFKETDKKGLKATPRYQPKVTVNLYYKGVLCPSDLSSLSSGEYARVSLAFTLAFHQINNNKVTPLMLDERTANLDQDLSTLIYSVIKENFPNQLLLVVAHQVITGPFDNIITLQDYN</sequence>
<dbReference type="EMBL" id="AF303741">
    <property type="protein sequence ID" value="AAK81983.1"/>
    <property type="molecule type" value="Genomic_DNA"/>
</dbReference>
<dbReference type="RefSeq" id="NP_149513.1">
    <property type="nucleotide sequence ID" value="NC_003038.1"/>
</dbReference>
<dbReference type="SMR" id="Q91G49"/>
<dbReference type="KEGG" id="vg:1733036"/>
<dbReference type="OrthoDB" id="7810at10239"/>
<dbReference type="Proteomes" id="UP000001359">
    <property type="component" value="Genome"/>
</dbReference>
<dbReference type="Gene3D" id="3.40.50.300">
    <property type="entry name" value="P-loop containing nucleotide triphosphate hydrolases"/>
    <property type="match status" value="2"/>
</dbReference>
<dbReference type="InterPro" id="IPR027417">
    <property type="entry name" value="P-loop_NTPase"/>
</dbReference>
<dbReference type="InterPro" id="IPR003395">
    <property type="entry name" value="RecF/RecN/SMC_N"/>
</dbReference>
<dbReference type="PANTHER" id="PTHR32114">
    <property type="entry name" value="ABC TRANSPORTER ABCH.3"/>
    <property type="match status" value="1"/>
</dbReference>
<dbReference type="PANTHER" id="PTHR32114:SF2">
    <property type="entry name" value="ABC TRANSPORTER ABCH.3"/>
    <property type="match status" value="1"/>
</dbReference>
<dbReference type="Pfam" id="PF02463">
    <property type="entry name" value="SMC_N"/>
    <property type="match status" value="1"/>
</dbReference>
<dbReference type="SUPFAM" id="SSF52540">
    <property type="entry name" value="P-loop containing nucleoside triphosphate hydrolases"/>
    <property type="match status" value="1"/>
</dbReference>